<feature type="chain" id="PRO_0000410298" description="Transcription elongation factor SPT6">
    <location>
        <begin position="1"/>
        <end position="1506"/>
    </location>
</feature>
<feature type="domain" description="S1 motif" evidence="2">
    <location>
        <begin position="1129"/>
        <end position="1201"/>
    </location>
</feature>
<feature type="domain" description="SH2">
    <location>
        <begin position="1239"/>
        <end position="1349"/>
    </location>
</feature>
<feature type="region of interest" description="Disordered" evidence="3">
    <location>
        <begin position="1"/>
        <end position="194"/>
    </location>
</feature>
<feature type="region of interest" description="Disordered" evidence="3">
    <location>
        <begin position="1460"/>
        <end position="1506"/>
    </location>
</feature>
<feature type="compositionally biased region" description="Basic and acidic residues" evidence="3">
    <location>
        <begin position="14"/>
        <end position="23"/>
    </location>
</feature>
<feature type="compositionally biased region" description="Acidic residues" evidence="3">
    <location>
        <begin position="24"/>
        <end position="35"/>
    </location>
</feature>
<feature type="compositionally biased region" description="Acidic residues" evidence="3">
    <location>
        <begin position="45"/>
        <end position="62"/>
    </location>
</feature>
<feature type="compositionally biased region" description="Basic residues" evidence="3">
    <location>
        <begin position="66"/>
        <end position="81"/>
    </location>
</feature>
<feature type="compositionally biased region" description="Acidic residues" evidence="3">
    <location>
        <begin position="90"/>
        <end position="99"/>
    </location>
</feature>
<feature type="compositionally biased region" description="Basic and acidic residues" evidence="3">
    <location>
        <begin position="100"/>
        <end position="110"/>
    </location>
</feature>
<feature type="compositionally biased region" description="Acidic residues" evidence="3">
    <location>
        <begin position="141"/>
        <end position="167"/>
    </location>
</feature>
<feature type="compositionally biased region" description="Basic and acidic residues" evidence="3">
    <location>
        <begin position="168"/>
        <end position="190"/>
    </location>
</feature>
<comment type="function">
    <text evidence="1">Histone H3-H4 chaperone that plays a role in maintenance of chromatin structure during RNA polymerase II transcription elongation thereby repressing transcription initiation from cryptic promoters. Mediates the reassembly of nucleosomes onto the promoters of at least a selected set of genes during repression; the nucleosome reassembly is essential for transcriptional repression. Essential for viability.</text>
</comment>
<comment type="subcellular location">
    <subcellularLocation>
        <location evidence="1">Nucleus</location>
    </subcellularLocation>
    <subcellularLocation>
        <location evidence="1">Chromosome</location>
    </subcellularLocation>
</comment>
<comment type="similarity">
    <text evidence="4">Belongs to the SPT6 family.</text>
</comment>
<keyword id="KW-0158">Chromosome</keyword>
<keyword id="KW-0539">Nucleus</keyword>
<keyword id="KW-0727">SH2 domain</keyword>
<keyword id="KW-0804">Transcription</keyword>
<accession>P0CR73</accession>
<accession>Q55Y77</accession>
<accession>Q5KLR1</accession>
<proteinExistence type="inferred from homology"/>
<protein>
    <recommendedName>
        <fullName>Transcription elongation factor SPT6</fullName>
    </recommendedName>
    <alternativeName>
        <fullName>Chromatin elongation factor SPT6</fullName>
    </alternativeName>
</protein>
<gene>
    <name type="primary">SPT6</name>
    <name type="ordered locus">CNBB1380</name>
</gene>
<sequence length="1506" mass="171709">MSDRPGSASEGEGDEIRPYGEDRDSSEESEDDDPEEAKRIAEGFIVDEDEEDGEGEDDEEDEETRRRRRKEEKRRRKKERRMRREREEAELSEDELELIEENRGLREGRPLKRLRRRSGSEGSENDRAVPTLQDMFRDDEDRMEDDDDDLMDFIEEDEEDEANQGETEEQRRERKRAEKLKRREQARSRPELTGVDRSSWDEIFAVFGDGQDYDWALEGEDGMDLDEEEEAAKKDLRLEDVFDPAEIKARRLQDEDKAVANADRPERHQIVNSTLSDNPVFATDTLYPPPDFAAKWVAPKVSFRTQYLFYNQHPEGSYPIPTIDNPQPYPVYRRPDLEIEFEKAVSTALNMMFVQHLEVPYLWHYKRDVFSLLENQGQSSVLFLERDELWQVYVLGQRYRAIHERNEQTRQQWGKIKARKGDIEDEYFTKGLLGKACVASIEAAGEGDEWLAYHYASDIKAIKEEEAFDEVSKKLPERAEREDIRRGRIMKLVEAFGIDANKVASSFQDVHGQPAPVMNPDKMPLELADEFTGAAYSSPEQALSAASFVLVQELSKDPAIRQQARDFMDTCGLVTVNATDRGMSVIDQYHLYYNFKFLTNKPVPDFRDSPQFVHMLKAEEEGLINIAFDIREDMLASFTDALIRCCRSNDYGEIASAWNEVRMEVCNTLVKKHLMPMASKWIKEHLRTQAEEYIAERCREELELRVNVRPYASSGMEQGETPSVLAITNGKGDIRDAVMAVMLDDEGNVRTQTKFDNLRDEEDKTMFIELLEKRKPKVVVIGGFSAQTARLKDAALVAIRQHAIELLGQNPPVSDAYPDHEGFQYAMAEYDEKLKAHLIPLIFVNDATARLYMSSEEAEKEHPNLPLNGRYALGLARYAQNPLNAYCKLGKHIASVTFMEHHQKLIPQEKLLYHLERGLVNSVCFMGIEINSCVADPYQRAMLPYIAGLGPRKADAVIYGIQKHGALINRMAFTDLGLFGPTIFENTAGFLTIESDLKDMMLEAENPQEQPDPLDMTRIHPENYEFAQKMCQDALDLDVEDVADRHKSEVVQTLMLDDKRGKKLGELNLDDFAFNLQRQGEGNKRHTLGEIVSELIRYRSDRRPAFYVPTDWEIVTMVTGETERTVGRGLKVTATVRKAISARVFCQLESGLDAVLERDYVADEDQAPVTSCDEVFKPRQAIKGVVIMPEPARFQVRISTRPSDLRQGVDFVQPFKDEEYNSKDRRDAAEAATAAKKQRRAGKVQRIVNHPNWHVLNSGQAEQFLASQHRGDCVIRPSSKGPDRIAVTWKVDEDVYQHIDVQEIDKPNEYSLGRILMVSGQYRYSDLDDLIINHVKATARKFDEIQMHEKYKPEHELDAFLKNYVQAHPGRSIYGFSVDSDRPGYLKLCFLSKPTKDGGVIQTWPVRVLPGAYKLGNAIVPGVTELSNAFKMQYSEKLAEQGHQGKTPGIYLGKTPMHLGGRTPALGSRTPAMGSRTPALGSRTPALGSRTPALGSRTPAQGGPRY</sequence>
<name>SPT6_CRYNB</name>
<organism>
    <name type="scientific">Cryptococcus neoformans var. neoformans serotype D (strain B-3501A)</name>
    <name type="common">Filobasidiella neoformans</name>
    <dbReference type="NCBI Taxonomy" id="283643"/>
    <lineage>
        <taxon>Eukaryota</taxon>
        <taxon>Fungi</taxon>
        <taxon>Dikarya</taxon>
        <taxon>Basidiomycota</taxon>
        <taxon>Agaricomycotina</taxon>
        <taxon>Tremellomycetes</taxon>
        <taxon>Tremellales</taxon>
        <taxon>Cryptococcaceae</taxon>
        <taxon>Cryptococcus</taxon>
        <taxon>Cryptococcus neoformans species complex</taxon>
    </lineage>
</organism>
<evidence type="ECO:0000250" key="1">
    <source>
        <dbReference type="UniProtKB" id="P23615"/>
    </source>
</evidence>
<evidence type="ECO:0000255" key="2">
    <source>
        <dbReference type="PROSITE-ProRule" id="PRU00180"/>
    </source>
</evidence>
<evidence type="ECO:0000256" key="3">
    <source>
        <dbReference type="SAM" id="MobiDB-lite"/>
    </source>
</evidence>
<evidence type="ECO:0000305" key="4"/>
<reference key="1">
    <citation type="journal article" date="2005" name="Science">
        <title>The genome of the basidiomycetous yeast and human pathogen Cryptococcus neoformans.</title>
        <authorList>
            <person name="Loftus B.J."/>
            <person name="Fung E."/>
            <person name="Roncaglia P."/>
            <person name="Rowley D."/>
            <person name="Amedeo P."/>
            <person name="Bruno D."/>
            <person name="Vamathevan J."/>
            <person name="Miranda M."/>
            <person name="Anderson I.J."/>
            <person name="Fraser J.A."/>
            <person name="Allen J.E."/>
            <person name="Bosdet I.E."/>
            <person name="Brent M.R."/>
            <person name="Chiu R."/>
            <person name="Doering T.L."/>
            <person name="Donlin M.J."/>
            <person name="D'Souza C.A."/>
            <person name="Fox D.S."/>
            <person name="Grinberg V."/>
            <person name="Fu J."/>
            <person name="Fukushima M."/>
            <person name="Haas B.J."/>
            <person name="Huang J.C."/>
            <person name="Janbon G."/>
            <person name="Jones S.J.M."/>
            <person name="Koo H.L."/>
            <person name="Krzywinski M.I."/>
            <person name="Kwon-Chung K.J."/>
            <person name="Lengeler K.B."/>
            <person name="Maiti R."/>
            <person name="Marra M.A."/>
            <person name="Marra R.E."/>
            <person name="Mathewson C.A."/>
            <person name="Mitchell T.G."/>
            <person name="Pertea M."/>
            <person name="Riggs F.R."/>
            <person name="Salzberg S.L."/>
            <person name="Schein J.E."/>
            <person name="Shvartsbeyn A."/>
            <person name="Shin H."/>
            <person name="Shumway M."/>
            <person name="Specht C.A."/>
            <person name="Suh B.B."/>
            <person name="Tenney A."/>
            <person name="Utterback T.R."/>
            <person name="Wickes B.L."/>
            <person name="Wortman J.R."/>
            <person name="Wye N.H."/>
            <person name="Kronstad J.W."/>
            <person name="Lodge J.K."/>
            <person name="Heitman J."/>
            <person name="Davis R.W."/>
            <person name="Fraser C.M."/>
            <person name="Hyman R.W."/>
        </authorList>
    </citation>
    <scope>NUCLEOTIDE SEQUENCE [LARGE SCALE GENOMIC DNA]</scope>
    <source>
        <strain>B-3501A</strain>
    </source>
</reference>
<dbReference type="EMBL" id="AAEY01000007">
    <property type="protein sequence ID" value="EAL22689.1"/>
    <property type="molecule type" value="Genomic_DNA"/>
</dbReference>
<dbReference type="RefSeq" id="XP_777336.1">
    <property type="nucleotide sequence ID" value="XM_772243.1"/>
</dbReference>
<dbReference type="SMR" id="P0CR73"/>
<dbReference type="GeneID" id="4934230"/>
<dbReference type="KEGG" id="cnb:CNBB1380"/>
<dbReference type="VEuPathDB" id="FungiDB:CNBB1380"/>
<dbReference type="HOGENOM" id="CLU_001680_0_1_1"/>
<dbReference type="OrthoDB" id="5494at5206"/>
<dbReference type="GO" id="GO:0008023">
    <property type="term" value="C:transcription elongation factor complex"/>
    <property type="evidence" value="ECO:0007669"/>
    <property type="project" value="TreeGrafter"/>
</dbReference>
<dbReference type="GO" id="GO:0003677">
    <property type="term" value="F:DNA binding"/>
    <property type="evidence" value="ECO:0007669"/>
    <property type="project" value="InterPro"/>
</dbReference>
<dbReference type="GO" id="GO:0042393">
    <property type="term" value="F:histone binding"/>
    <property type="evidence" value="ECO:0007669"/>
    <property type="project" value="TreeGrafter"/>
</dbReference>
<dbReference type="GO" id="GO:0031491">
    <property type="term" value="F:nucleosome binding"/>
    <property type="evidence" value="ECO:0007669"/>
    <property type="project" value="TreeGrafter"/>
</dbReference>
<dbReference type="GO" id="GO:0034728">
    <property type="term" value="P:nucleosome organization"/>
    <property type="evidence" value="ECO:0007669"/>
    <property type="project" value="TreeGrafter"/>
</dbReference>
<dbReference type="GO" id="GO:0140673">
    <property type="term" value="P:transcription elongation-coupled chromatin remodeling"/>
    <property type="evidence" value="ECO:0007669"/>
    <property type="project" value="InterPro"/>
</dbReference>
<dbReference type="CDD" id="cd09928">
    <property type="entry name" value="SH2_Cterm_SPT6_like"/>
    <property type="match status" value="1"/>
</dbReference>
<dbReference type="CDD" id="cd09918">
    <property type="entry name" value="SH2_Nterm_SPT6_like"/>
    <property type="match status" value="1"/>
</dbReference>
<dbReference type="FunFam" id="1.10.10.2740:FF:000002">
    <property type="entry name" value="Transcription elongation factor Spt6"/>
    <property type="match status" value="1"/>
</dbReference>
<dbReference type="FunFam" id="3.30.505.10:FF:000056">
    <property type="entry name" value="Transcription elongation factor Spt6"/>
    <property type="match status" value="1"/>
</dbReference>
<dbReference type="Gene3D" id="1.10.10.650">
    <property type="entry name" value="RuvA domain 2-like"/>
    <property type="match status" value="1"/>
</dbReference>
<dbReference type="Gene3D" id="3.30.505.10">
    <property type="entry name" value="SH2 domain"/>
    <property type="match status" value="2"/>
</dbReference>
<dbReference type="Gene3D" id="1.10.10.2740">
    <property type="entry name" value="Spt6, Death-like domain"/>
    <property type="match status" value="1"/>
</dbReference>
<dbReference type="Gene3D" id="1.10.150.850">
    <property type="entry name" value="Spt6, helix-hairpin-helix domain"/>
    <property type="match status" value="1"/>
</dbReference>
<dbReference type="Gene3D" id="1.10.3500.10">
    <property type="entry name" value="Tex N-terminal region-like"/>
    <property type="match status" value="1"/>
</dbReference>
<dbReference type="Gene3D" id="3.30.420.140">
    <property type="entry name" value="YqgF/RNase H-like domain"/>
    <property type="match status" value="1"/>
</dbReference>
<dbReference type="InterPro" id="IPR041692">
    <property type="entry name" value="HHH_9"/>
</dbReference>
<dbReference type="InterPro" id="IPR012337">
    <property type="entry name" value="RNaseH-like_sf"/>
</dbReference>
<dbReference type="InterPro" id="IPR010994">
    <property type="entry name" value="RuvA_2-like"/>
</dbReference>
<dbReference type="InterPro" id="IPR003029">
    <property type="entry name" value="S1_domain"/>
</dbReference>
<dbReference type="InterPro" id="IPR000980">
    <property type="entry name" value="SH2"/>
</dbReference>
<dbReference type="InterPro" id="IPR036860">
    <property type="entry name" value="SH2_dom_sf"/>
</dbReference>
<dbReference type="InterPro" id="IPR049540">
    <property type="entry name" value="Spt6-like_S1"/>
</dbReference>
<dbReference type="InterPro" id="IPR028083">
    <property type="entry name" value="Spt6_acidic_N_dom"/>
</dbReference>
<dbReference type="InterPro" id="IPR042066">
    <property type="entry name" value="Spt6_death-like"/>
</dbReference>
<dbReference type="InterPro" id="IPR032706">
    <property type="entry name" value="Spt6_HHH"/>
</dbReference>
<dbReference type="InterPro" id="IPR028088">
    <property type="entry name" value="Spt6_HTH_DNA-bd_dom"/>
</dbReference>
<dbReference type="InterPro" id="IPR035420">
    <property type="entry name" value="Spt6_SH2"/>
</dbReference>
<dbReference type="InterPro" id="IPR035018">
    <property type="entry name" value="Spt6_SH2_C"/>
</dbReference>
<dbReference type="InterPro" id="IPR035019">
    <property type="entry name" value="Spt6_SH2_N"/>
</dbReference>
<dbReference type="InterPro" id="IPR028231">
    <property type="entry name" value="Spt6_YqgF"/>
</dbReference>
<dbReference type="InterPro" id="IPR055179">
    <property type="entry name" value="Tex-like_central_region"/>
</dbReference>
<dbReference type="InterPro" id="IPR023323">
    <property type="entry name" value="Tex-like_dom_sf"/>
</dbReference>
<dbReference type="InterPro" id="IPR023319">
    <property type="entry name" value="Tex-like_HTH_dom_sf"/>
</dbReference>
<dbReference type="InterPro" id="IPR017072">
    <property type="entry name" value="TF_Spt6"/>
</dbReference>
<dbReference type="InterPro" id="IPR037027">
    <property type="entry name" value="YqgF/RNaseH-like_dom_sf"/>
</dbReference>
<dbReference type="PANTHER" id="PTHR10145">
    <property type="entry name" value="TRANSCRIPTION ELONGATION FACTOR SPT6"/>
    <property type="match status" value="1"/>
</dbReference>
<dbReference type="PANTHER" id="PTHR10145:SF6">
    <property type="entry name" value="TRANSCRIPTION ELONGATION FACTOR SPT6"/>
    <property type="match status" value="1"/>
</dbReference>
<dbReference type="Pfam" id="PF12815">
    <property type="entry name" value="CTD"/>
    <property type="match status" value="1"/>
</dbReference>
<dbReference type="Pfam" id="PF14635">
    <property type="entry name" value="HHH_7"/>
    <property type="match status" value="1"/>
</dbReference>
<dbReference type="Pfam" id="PF17674">
    <property type="entry name" value="HHH_9"/>
    <property type="match status" value="1"/>
</dbReference>
<dbReference type="Pfam" id="PF14641">
    <property type="entry name" value="HTH_44"/>
    <property type="match status" value="1"/>
</dbReference>
<dbReference type="Pfam" id="PF14633">
    <property type="entry name" value="SH2_2"/>
    <property type="match status" value="1"/>
</dbReference>
<dbReference type="Pfam" id="PF14632">
    <property type="entry name" value="SPT6_acidic"/>
    <property type="match status" value="1"/>
</dbReference>
<dbReference type="Pfam" id="PF21710">
    <property type="entry name" value="Spt6_S1"/>
    <property type="match status" value="1"/>
</dbReference>
<dbReference type="Pfam" id="PF22706">
    <property type="entry name" value="Tex_central_region"/>
    <property type="match status" value="1"/>
</dbReference>
<dbReference type="Pfam" id="PF14639">
    <property type="entry name" value="YqgF"/>
    <property type="match status" value="2"/>
</dbReference>
<dbReference type="SMART" id="SM00252">
    <property type="entry name" value="SH2"/>
    <property type="match status" value="1"/>
</dbReference>
<dbReference type="SUPFAM" id="SSF53098">
    <property type="entry name" value="Ribonuclease H-like"/>
    <property type="match status" value="1"/>
</dbReference>
<dbReference type="SUPFAM" id="SSF47781">
    <property type="entry name" value="RuvA domain 2-like"/>
    <property type="match status" value="2"/>
</dbReference>
<dbReference type="SUPFAM" id="SSF55550">
    <property type="entry name" value="SH2 domain"/>
    <property type="match status" value="1"/>
</dbReference>
<dbReference type="SUPFAM" id="SSF158832">
    <property type="entry name" value="Tex N-terminal region-like"/>
    <property type="match status" value="1"/>
</dbReference>
<dbReference type="PROSITE" id="PS50126">
    <property type="entry name" value="S1"/>
    <property type="match status" value="1"/>
</dbReference>